<comment type="subcellular location">
    <subcellularLocation>
        <location evidence="1">Mitochondrion membrane</location>
        <topology evidence="1">Single-pass membrane protein</topology>
    </subcellularLocation>
</comment>
<comment type="similarity">
    <text evidence="3">Belongs to the AIM36 family.</text>
</comment>
<feature type="transit peptide" description="Mitochondrion" evidence="2">
    <location>
        <begin position="1"/>
        <end position="40"/>
    </location>
</feature>
<feature type="chain" id="PRO_0000399735" description="Altered inheritance of mitochondria protein 36, mitochondrial">
    <location>
        <begin position="41"/>
        <end position="255"/>
    </location>
</feature>
<feature type="transmembrane region" description="Helical" evidence="2">
    <location>
        <begin position="64"/>
        <end position="82"/>
    </location>
</feature>
<organism>
    <name type="scientific">Saccharomyces cerevisiae (strain Lalvin EC1118 / Prise de mousse)</name>
    <name type="common">Baker's yeast</name>
    <dbReference type="NCBI Taxonomy" id="643680"/>
    <lineage>
        <taxon>Eukaryota</taxon>
        <taxon>Fungi</taxon>
        <taxon>Dikarya</taxon>
        <taxon>Ascomycota</taxon>
        <taxon>Saccharomycotina</taxon>
        <taxon>Saccharomycetes</taxon>
        <taxon>Saccharomycetales</taxon>
        <taxon>Saccharomycetaceae</taxon>
        <taxon>Saccharomyces</taxon>
    </lineage>
</organism>
<protein>
    <recommendedName>
        <fullName>Altered inheritance of mitochondria protein 36, mitochondrial</fullName>
    </recommendedName>
    <alternativeName>
        <fullName>Found in mitochondria protein 39</fullName>
    </alternativeName>
</protein>
<reference key="1">
    <citation type="journal article" date="2009" name="Proc. Natl. Acad. Sci. U.S.A.">
        <title>Eukaryote-to-eukaryote gene transfer events revealed by the genome sequence of the wine yeast Saccharomyces cerevisiae EC1118.</title>
        <authorList>
            <person name="Novo M."/>
            <person name="Bigey F."/>
            <person name="Beyne E."/>
            <person name="Galeote V."/>
            <person name="Gavory F."/>
            <person name="Mallet S."/>
            <person name="Cambon B."/>
            <person name="Legras J.-L."/>
            <person name="Wincker P."/>
            <person name="Casaregola S."/>
            <person name="Dequin S."/>
        </authorList>
    </citation>
    <scope>NUCLEOTIDE SEQUENCE [LARGE SCALE GENOMIC DNA]</scope>
    <source>
        <strain>Lalvin EC1118 / Prise de mousse</strain>
    </source>
</reference>
<gene>
    <name type="primary">AIM36</name>
    <name type="synonym">FMP39</name>
    <name type="ORF">EC1118_1M3_3400g</name>
</gene>
<accession>C8ZF15</accession>
<dbReference type="EMBL" id="FN393082">
    <property type="protein sequence ID" value="CAY81981.1"/>
    <property type="molecule type" value="Genomic_DNA"/>
</dbReference>
<dbReference type="SMR" id="C8ZF15"/>
<dbReference type="HOGENOM" id="CLU_090420_0_0_1"/>
<dbReference type="OrthoDB" id="41158at4893"/>
<dbReference type="Proteomes" id="UP000000286">
    <property type="component" value="Chromosome XIII, Scaffold EC1118_1M3"/>
</dbReference>
<dbReference type="GO" id="GO:0031966">
    <property type="term" value="C:mitochondrial membrane"/>
    <property type="evidence" value="ECO:0007669"/>
    <property type="project" value="UniProtKB-SubCell"/>
</dbReference>
<sequence>MLRPLRKSVLASCRHCFKVCGGLPQKQLPLFSPLLLRARYSSTDSSTKRSNKSDKIDAPGFKKIFLVAIIGTVIFVKTVQSLDKNKPKTTLSEEEFENVVKGLKRRVAIFPQGEVDIKFSLSPSIEETRKVLQKSQGDDINELQFVDPVKVIDYYRTLRDDRYEALLNEYYKKYGCDTYAYNLPTGMLVMLLGRYFKENFKAGDKLVVVNFPHSIADATRFENEVSIVSKIFVPRKLSGSDVCKYYETVGKADII</sequence>
<proteinExistence type="inferred from homology"/>
<keyword id="KW-0472">Membrane</keyword>
<keyword id="KW-0496">Mitochondrion</keyword>
<keyword id="KW-0809">Transit peptide</keyword>
<keyword id="KW-0812">Transmembrane</keyword>
<keyword id="KW-1133">Transmembrane helix</keyword>
<evidence type="ECO:0000250" key="1"/>
<evidence type="ECO:0000255" key="2"/>
<evidence type="ECO:0000305" key="3"/>
<name>AIM36_YEAS8</name>